<sequence length="82" mass="9437">MSEVSSAPVRRPFHRRRKTCPFSGANAPRIDYKDVRLLQRYISERGKIVPSRITAVSQKKQRELAQAIKRARFLGLLPYVVA</sequence>
<protein>
    <recommendedName>
        <fullName evidence="1">Small ribosomal subunit protein bS18</fullName>
    </recommendedName>
    <alternativeName>
        <fullName evidence="2">30S ribosomal protein S18</fullName>
    </alternativeName>
</protein>
<accession>B9JCB8</accession>
<feature type="chain" id="PRO_1000196510" description="Small ribosomal subunit protein bS18">
    <location>
        <begin position="1"/>
        <end position="82"/>
    </location>
</feature>
<dbReference type="EMBL" id="CP000628">
    <property type="protein sequence ID" value="ACM26039.1"/>
    <property type="molecule type" value="Genomic_DNA"/>
</dbReference>
<dbReference type="RefSeq" id="WP_004122103.1">
    <property type="nucleotide sequence ID" value="NC_011985.1"/>
</dbReference>
<dbReference type="SMR" id="B9JCB8"/>
<dbReference type="STRING" id="311403.Arad_1657"/>
<dbReference type="GeneID" id="86847918"/>
<dbReference type="KEGG" id="ara:Arad_1657"/>
<dbReference type="eggNOG" id="COG0238">
    <property type="taxonomic scope" value="Bacteria"/>
</dbReference>
<dbReference type="HOGENOM" id="CLU_148710_2_2_5"/>
<dbReference type="Proteomes" id="UP000001600">
    <property type="component" value="Chromosome 1"/>
</dbReference>
<dbReference type="GO" id="GO:0022627">
    <property type="term" value="C:cytosolic small ribosomal subunit"/>
    <property type="evidence" value="ECO:0007669"/>
    <property type="project" value="TreeGrafter"/>
</dbReference>
<dbReference type="GO" id="GO:0070181">
    <property type="term" value="F:small ribosomal subunit rRNA binding"/>
    <property type="evidence" value="ECO:0007669"/>
    <property type="project" value="TreeGrafter"/>
</dbReference>
<dbReference type="GO" id="GO:0003735">
    <property type="term" value="F:structural constituent of ribosome"/>
    <property type="evidence" value="ECO:0007669"/>
    <property type="project" value="InterPro"/>
</dbReference>
<dbReference type="GO" id="GO:0006412">
    <property type="term" value="P:translation"/>
    <property type="evidence" value="ECO:0007669"/>
    <property type="project" value="UniProtKB-UniRule"/>
</dbReference>
<dbReference type="Gene3D" id="4.10.640.10">
    <property type="entry name" value="Ribosomal protein S18"/>
    <property type="match status" value="1"/>
</dbReference>
<dbReference type="HAMAP" id="MF_00270">
    <property type="entry name" value="Ribosomal_bS18"/>
    <property type="match status" value="1"/>
</dbReference>
<dbReference type="InterPro" id="IPR001648">
    <property type="entry name" value="Ribosomal_bS18"/>
</dbReference>
<dbReference type="InterPro" id="IPR018275">
    <property type="entry name" value="Ribosomal_bS18_CS"/>
</dbReference>
<dbReference type="InterPro" id="IPR036870">
    <property type="entry name" value="Ribosomal_bS18_sf"/>
</dbReference>
<dbReference type="NCBIfam" id="TIGR00165">
    <property type="entry name" value="S18"/>
    <property type="match status" value="1"/>
</dbReference>
<dbReference type="PANTHER" id="PTHR13479">
    <property type="entry name" value="30S RIBOSOMAL PROTEIN S18"/>
    <property type="match status" value="1"/>
</dbReference>
<dbReference type="PANTHER" id="PTHR13479:SF40">
    <property type="entry name" value="SMALL RIBOSOMAL SUBUNIT PROTEIN BS18M"/>
    <property type="match status" value="1"/>
</dbReference>
<dbReference type="Pfam" id="PF01084">
    <property type="entry name" value="Ribosomal_S18"/>
    <property type="match status" value="1"/>
</dbReference>
<dbReference type="PRINTS" id="PR00974">
    <property type="entry name" value="RIBOSOMALS18"/>
</dbReference>
<dbReference type="SUPFAM" id="SSF46911">
    <property type="entry name" value="Ribosomal protein S18"/>
    <property type="match status" value="1"/>
</dbReference>
<dbReference type="PROSITE" id="PS00057">
    <property type="entry name" value="RIBOSOMAL_S18"/>
    <property type="match status" value="1"/>
</dbReference>
<comment type="function">
    <text evidence="1">Binds as a heterodimer with protein bS6 to the central domain of the 16S rRNA, where it helps stabilize the platform of the 30S subunit.</text>
</comment>
<comment type="subunit">
    <text evidence="1">Part of the 30S ribosomal subunit. Forms a tight heterodimer with protein bS6.</text>
</comment>
<comment type="similarity">
    <text evidence="1">Belongs to the bacterial ribosomal protein bS18 family.</text>
</comment>
<organism>
    <name type="scientific">Rhizobium rhizogenes (strain K84 / ATCC BAA-868)</name>
    <name type="common">Agrobacterium radiobacter</name>
    <dbReference type="NCBI Taxonomy" id="311403"/>
    <lineage>
        <taxon>Bacteria</taxon>
        <taxon>Pseudomonadati</taxon>
        <taxon>Pseudomonadota</taxon>
        <taxon>Alphaproteobacteria</taxon>
        <taxon>Hyphomicrobiales</taxon>
        <taxon>Rhizobiaceae</taxon>
        <taxon>Rhizobium/Agrobacterium group</taxon>
        <taxon>Rhizobium</taxon>
    </lineage>
</organism>
<evidence type="ECO:0000255" key="1">
    <source>
        <dbReference type="HAMAP-Rule" id="MF_00270"/>
    </source>
</evidence>
<evidence type="ECO:0000305" key="2"/>
<reference key="1">
    <citation type="journal article" date="2009" name="J. Bacteriol.">
        <title>Genome sequences of three Agrobacterium biovars help elucidate the evolution of multichromosome genomes in bacteria.</title>
        <authorList>
            <person name="Slater S.C."/>
            <person name="Goldman B.S."/>
            <person name="Goodner B."/>
            <person name="Setubal J.C."/>
            <person name="Farrand S.K."/>
            <person name="Nester E.W."/>
            <person name="Burr T.J."/>
            <person name="Banta L."/>
            <person name="Dickerman A.W."/>
            <person name="Paulsen I."/>
            <person name="Otten L."/>
            <person name="Suen G."/>
            <person name="Welch R."/>
            <person name="Almeida N.F."/>
            <person name="Arnold F."/>
            <person name="Burton O.T."/>
            <person name="Du Z."/>
            <person name="Ewing A."/>
            <person name="Godsy E."/>
            <person name="Heisel S."/>
            <person name="Houmiel K.L."/>
            <person name="Jhaveri J."/>
            <person name="Lu J."/>
            <person name="Miller N.M."/>
            <person name="Norton S."/>
            <person name="Chen Q."/>
            <person name="Phoolcharoen W."/>
            <person name="Ohlin V."/>
            <person name="Ondrusek D."/>
            <person name="Pride N."/>
            <person name="Stricklin S.L."/>
            <person name="Sun J."/>
            <person name="Wheeler C."/>
            <person name="Wilson L."/>
            <person name="Zhu H."/>
            <person name="Wood D.W."/>
        </authorList>
    </citation>
    <scope>NUCLEOTIDE SEQUENCE [LARGE SCALE GENOMIC DNA]</scope>
    <source>
        <strain>K84 / ATCC BAA-868</strain>
    </source>
</reference>
<proteinExistence type="inferred from homology"/>
<name>RS18_RHIR8</name>
<gene>
    <name evidence="1" type="primary">rpsR</name>
    <name type="ordered locus">Arad_1657</name>
</gene>
<keyword id="KW-0687">Ribonucleoprotein</keyword>
<keyword id="KW-0689">Ribosomal protein</keyword>
<keyword id="KW-0694">RNA-binding</keyword>
<keyword id="KW-0699">rRNA-binding</keyword>